<sequence>MNPSDTHDHGAEASPLGQSVVYRDSYAPELLFPIARQIKRDELGLAPDTLPFVGEDLWNAYELSWLNSRGKPVAAIGTFRVPVTSPRLIESKSLKLYLNSFNQHRFVDPTLVHDTLTRDLSTAAGAPVAVSIEVLSRRPTRVFGYPHGVLLDEIDIEIDTYRTDPAFLQSDFNADEVSETLYSHLLKSNCLVTGQPDWGTIVLRYIGPPIDRAGLLRYIVSFRSHNEFHEQCVERIFCDVLRRCAPRHLAVWARYTRRGGLDINPFRSTGHFTQFDNIAEVRQ</sequence>
<keyword id="KW-0963">Cytoplasm</keyword>
<keyword id="KW-0521">NADP</keyword>
<keyword id="KW-0560">Oxidoreductase</keyword>
<keyword id="KW-0671">Queuosine biosynthesis</keyword>
<keyword id="KW-1185">Reference proteome</keyword>
<gene>
    <name evidence="1" type="primary">queF</name>
    <name type="ordered locus">AZOSEA09670</name>
    <name type="ORF">ebA1782</name>
</gene>
<organism>
    <name type="scientific">Aromatoleum aromaticum (strain DSM 19018 / LMG 30748 / EbN1)</name>
    <name type="common">Azoarcus sp. (strain EbN1)</name>
    <dbReference type="NCBI Taxonomy" id="76114"/>
    <lineage>
        <taxon>Bacteria</taxon>
        <taxon>Pseudomonadati</taxon>
        <taxon>Pseudomonadota</taxon>
        <taxon>Betaproteobacteria</taxon>
        <taxon>Rhodocyclales</taxon>
        <taxon>Rhodocyclaceae</taxon>
        <taxon>Aromatoleum</taxon>
    </lineage>
</organism>
<protein>
    <recommendedName>
        <fullName evidence="1">NADPH-dependent 7-cyano-7-deazaguanine reductase</fullName>
        <ecNumber evidence="1">1.7.1.13</ecNumber>
    </recommendedName>
    <alternativeName>
        <fullName evidence="1">7-cyano-7-carbaguanine reductase</fullName>
    </alternativeName>
    <alternativeName>
        <fullName evidence="1">NADPH-dependent nitrile oxidoreductase</fullName>
    </alternativeName>
    <alternativeName>
        <fullName evidence="1">PreQ(0) reductase</fullName>
    </alternativeName>
</protein>
<reference key="1">
    <citation type="journal article" date="2005" name="Arch. Microbiol.">
        <title>The genome sequence of an anaerobic aromatic-degrading denitrifying bacterium, strain EbN1.</title>
        <authorList>
            <person name="Rabus R."/>
            <person name="Kube M."/>
            <person name="Heider J."/>
            <person name="Beck A."/>
            <person name="Heitmann K."/>
            <person name="Widdel F."/>
            <person name="Reinhardt R."/>
        </authorList>
    </citation>
    <scope>NUCLEOTIDE SEQUENCE [LARGE SCALE GENOMIC DNA]</scope>
    <source>
        <strain>DSM 19018 / LMG 30748 / EbN1</strain>
    </source>
</reference>
<accession>Q5P6G9</accession>
<comment type="function">
    <text evidence="1">Catalyzes the NADPH-dependent reduction of 7-cyano-7-deazaguanine (preQ0) to 7-aminomethyl-7-deazaguanine (preQ1).</text>
</comment>
<comment type="catalytic activity">
    <reaction evidence="1">
        <text>7-aminomethyl-7-carbaguanine + 2 NADP(+) = 7-cyano-7-deazaguanine + 2 NADPH + 3 H(+)</text>
        <dbReference type="Rhea" id="RHEA:13409"/>
        <dbReference type="ChEBI" id="CHEBI:15378"/>
        <dbReference type="ChEBI" id="CHEBI:45075"/>
        <dbReference type="ChEBI" id="CHEBI:57783"/>
        <dbReference type="ChEBI" id="CHEBI:58349"/>
        <dbReference type="ChEBI" id="CHEBI:58703"/>
        <dbReference type="EC" id="1.7.1.13"/>
    </reaction>
</comment>
<comment type="pathway">
    <text evidence="1">tRNA modification; tRNA-queuosine biosynthesis.</text>
</comment>
<comment type="subunit">
    <text evidence="1">Homodimer.</text>
</comment>
<comment type="subcellular location">
    <subcellularLocation>
        <location evidence="1">Cytoplasm</location>
    </subcellularLocation>
</comment>
<comment type="similarity">
    <text evidence="1">Belongs to the GTP cyclohydrolase I family. QueF type 2 subfamily.</text>
</comment>
<name>QUEF_AROAE</name>
<proteinExistence type="inferred from homology"/>
<dbReference type="EC" id="1.7.1.13" evidence="1"/>
<dbReference type="EMBL" id="CR555306">
    <property type="protein sequence ID" value="CAI07092.1"/>
    <property type="molecule type" value="Genomic_DNA"/>
</dbReference>
<dbReference type="RefSeq" id="WP_011236817.1">
    <property type="nucleotide sequence ID" value="NC_006513.1"/>
</dbReference>
<dbReference type="SMR" id="Q5P6G9"/>
<dbReference type="STRING" id="76114.ebA1782"/>
<dbReference type="KEGG" id="eba:ebA1782"/>
<dbReference type="eggNOG" id="COG0780">
    <property type="taxonomic scope" value="Bacteria"/>
</dbReference>
<dbReference type="eggNOG" id="COG2904">
    <property type="taxonomic scope" value="Bacteria"/>
</dbReference>
<dbReference type="HOGENOM" id="CLU_054738_0_0_4"/>
<dbReference type="OrthoDB" id="9789995at2"/>
<dbReference type="UniPathway" id="UPA00392"/>
<dbReference type="Proteomes" id="UP000006552">
    <property type="component" value="Chromosome"/>
</dbReference>
<dbReference type="GO" id="GO:0005737">
    <property type="term" value="C:cytoplasm"/>
    <property type="evidence" value="ECO:0007669"/>
    <property type="project" value="UniProtKB-SubCell"/>
</dbReference>
<dbReference type="GO" id="GO:0033739">
    <property type="term" value="F:preQ1 synthase activity"/>
    <property type="evidence" value="ECO:0007669"/>
    <property type="project" value="UniProtKB-UniRule"/>
</dbReference>
<dbReference type="GO" id="GO:0008616">
    <property type="term" value="P:queuosine biosynthetic process"/>
    <property type="evidence" value="ECO:0007669"/>
    <property type="project" value="UniProtKB-UniRule"/>
</dbReference>
<dbReference type="GO" id="GO:0006400">
    <property type="term" value="P:tRNA modification"/>
    <property type="evidence" value="ECO:0007669"/>
    <property type="project" value="UniProtKB-UniRule"/>
</dbReference>
<dbReference type="Gene3D" id="3.30.1130.10">
    <property type="match status" value="2"/>
</dbReference>
<dbReference type="HAMAP" id="MF_00817">
    <property type="entry name" value="QueF_type2"/>
    <property type="match status" value="1"/>
</dbReference>
<dbReference type="InterPro" id="IPR043133">
    <property type="entry name" value="GTP-CH-I_C/QueF"/>
</dbReference>
<dbReference type="InterPro" id="IPR050084">
    <property type="entry name" value="NADPH_dep_7-cyano-7-deazaG_red"/>
</dbReference>
<dbReference type="InterPro" id="IPR029500">
    <property type="entry name" value="QueF"/>
</dbReference>
<dbReference type="InterPro" id="IPR029139">
    <property type="entry name" value="QueF_N"/>
</dbReference>
<dbReference type="InterPro" id="IPR016428">
    <property type="entry name" value="QueF_type2"/>
</dbReference>
<dbReference type="NCBIfam" id="TIGR03138">
    <property type="entry name" value="QueF"/>
    <property type="match status" value="1"/>
</dbReference>
<dbReference type="PANTHER" id="PTHR34354">
    <property type="entry name" value="NADPH-DEPENDENT 7-CYANO-7-DEAZAGUANINE REDUCTASE"/>
    <property type="match status" value="1"/>
</dbReference>
<dbReference type="PANTHER" id="PTHR34354:SF1">
    <property type="entry name" value="NADPH-DEPENDENT 7-CYANO-7-DEAZAGUANINE REDUCTASE"/>
    <property type="match status" value="1"/>
</dbReference>
<dbReference type="Pfam" id="PF14489">
    <property type="entry name" value="QueF"/>
    <property type="match status" value="1"/>
</dbReference>
<dbReference type="Pfam" id="PF14819">
    <property type="entry name" value="QueF_N"/>
    <property type="match status" value="1"/>
</dbReference>
<dbReference type="PIRSF" id="PIRSF004750">
    <property type="entry name" value="Nitrile_oxidored_YqcD_prd"/>
    <property type="match status" value="1"/>
</dbReference>
<dbReference type="SUPFAM" id="SSF55620">
    <property type="entry name" value="Tetrahydrobiopterin biosynthesis enzymes-like"/>
    <property type="match status" value="1"/>
</dbReference>
<feature type="chain" id="PRO_0000163019" description="NADPH-dependent 7-cyano-7-deazaguanine reductase">
    <location>
        <begin position="1"/>
        <end position="283"/>
    </location>
</feature>
<feature type="active site" description="Thioimide intermediate" evidence="1">
    <location>
        <position position="190"/>
    </location>
</feature>
<feature type="active site" description="Proton donor" evidence="1">
    <location>
        <position position="197"/>
    </location>
</feature>
<feature type="binding site" evidence="1">
    <location>
        <begin position="89"/>
        <end position="91"/>
    </location>
    <ligand>
        <name>substrate</name>
    </ligand>
</feature>
<feature type="binding site" evidence="1">
    <location>
        <begin position="91"/>
        <end position="92"/>
    </location>
    <ligand>
        <name>NADPH</name>
        <dbReference type="ChEBI" id="CHEBI:57783"/>
    </ligand>
</feature>
<feature type="binding site" evidence="1">
    <location>
        <begin position="229"/>
        <end position="230"/>
    </location>
    <ligand>
        <name>substrate</name>
    </ligand>
</feature>
<feature type="binding site" evidence="1">
    <location>
        <begin position="258"/>
        <end position="259"/>
    </location>
    <ligand>
        <name>NADPH</name>
        <dbReference type="ChEBI" id="CHEBI:57783"/>
    </ligand>
</feature>
<evidence type="ECO:0000255" key="1">
    <source>
        <dbReference type="HAMAP-Rule" id="MF_00817"/>
    </source>
</evidence>